<protein>
    <recommendedName>
        <fullName evidence="1">Potassium-transporting ATPase potassium-binding subunit</fullName>
    </recommendedName>
    <alternativeName>
        <fullName evidence="1">ATP phosphohydrolase [potassium-transporting] A chain</fullName>
    </alternativeName>
    <alternativeName>
        <fullName evidence="1">Potassium-binding and translocating subunit A</fullName>
    </alternativeName>
    <alternativeName>
        <fullName evidence="1">Potassium-translocating ATPase A chain</fullName>
    </alternativeName>
</protein>
<gene>
    <name evidence="1" type="primary">kdpA</name>
    <name type="ordered locus">PFLU_1676</name>
</gene>
<evidence type="ECO:0000255" key="1">
    <source>
        <dbReference type="HAMAP-Rule" id="MF_00275"/>
    </source>
</evidence>
<accession>C3K4Y3</accession>
<keyword id="KW-0997">Cell inner membrane</keyword>
<keyword id="KW-1003">Cell membrane</keyword>
<keyword id="KW-0406">Ion transport</keyword>
<keyword id="KW-0472">Membrane</keyword>
<keyword id="KW-0630">Potassium</keyword>
<keyword id="KW-0633">Potassium transport</keyword>
<keyword id="KW-0812">Transmembrane</keyword>
<keyword id="KW-1133">Transmembrane helix</keyword>
<keyword id="KW-0813">Transport</keyword>
<dbReference type="EMBL" id="AM181176">
    <property type="protein sequence ID" value="CAY47924.1"/>
    <property type="molecule type" value="Genomic_DNA"/>
</dbReference>
<dbReference type="RefSeq" id="WP_012722956.1">
    <property type="nucleotide sequence ID" value="NC_012660.1"/>
</dbReference>
<dbReference type="SMR" id="C3K4Y3"/>
<dbReference type="STRING" id="294.SRM1_03983"/>
<dbReference type="PATRIC" id="fig|216595.4.peg.1897"/>
<dbReference type="eggNOG" id="COG2060">
    <property type="taxonomic scope" value="Bacteria"/>
</dbReference>
<dbReference type="HOGENOM" id="CLU_018614_3_0_6"/>
<dbReference type="OrthoDB" id="9763796at2"/>
<dbReference type="GO" id="GO:0005886">
    <property type="term" value="C:plasma membrane"/>
    <property type="evidence" value="ECO:0007669"/>
    <property type="project" value="UniProtKB-SubCell"/>
</dbReference>
<dbReference type="GO" id="GO:0008556">
    <property type="term" value="F:P-type potassium transmembrane transporter activity"/>
    <property type="evidence" value="ECO:0007669"/>
    <property type="project" value="InterPro"/>
</dbReference>
<dbReference type="GO" id="GO:0030955">
    <property type="term" value="F:potassium ion binding"/>
    <property type="evidence" value="ECO:0007669"/>
    <property type="project" value="UniProtKB-UniRule"/>
</dbReference>
<dbReference type="HAMAP" id="MF_00275">
    <property type="entry name" value="KdpA"/>
    <property type="match status" value="1"/>
</dbReference>
<dbReference type="InterPro" id="IPR004623">
    <property type="entry name" value="KdpA"/>
</dbReference>
<dbReference type="NCBIfam" id="TIGR00680">
    <property type="entry name" value="kdpA"/>
    <property type="match status" value="1"/>
</dbReference>
<dbReference type="PANTHER" id="PTHR30607">
    <property type="entry name" value="POTASSIUM-TRANSPORTING ATPASE A CHAIN"/>
    <property type="match status" value="1"/>
</dbReference>
<dbReference type="PANTHER" id="PTHR30607:SF2">
    <property type="entry name" value="POTASSIUM-TRANSPORTING ATPASE POTASSIUM-BINDING SUBUNIT"/>
    <property type="match status" value="1"/>
</dbReference>
<dbReference type="Pfam" id="PF03814">
    <property type="entry name" value="KdpA"/>
    <property type="match status" value="1"/>
</dbReference>
<dbReference type="PIRSF" id="PIRSF001294">
    <property type="entry name" value="K_ATPaseA"/>
    <property type="match status" value="1"/>
</dbReference>
<reference key="1">
    <citation type="journal article" date="2009" name="Genome Biol.">
        <title>Genomic and genetic analyses of diversity and plant interactions of Pseudomonas fluorescens.</title>
        <authorList>
            <person name="Silby M.W."/>
            <person name="Cerdeno-Tarraga A.M."/>
            <person name="Vernikos G.S."/>
            <person name="Giddens S.R."/>
            <person name="Jackson R.W."/>
            <person name="Preston G.M."/>
            <person name="Zhang X.-X."/>
            <person name="Moon C.D."/>
            <person name="Gehrig S.M."/>
            <person name="Godfrey S.A.C."/>
            <person name="Knight C.G."/>
            <person name="Malone J.G."/>
            <person name="Robinson Z."/>
            <person name="Spiers A.J."/>
            <person name="Harris S."/>
            <person name="Challis G.L."/>
            <person name="Yaxley A.M."/>
            <person name="Harris D."/>
            <person name="Seeger K."/>
            <person name="Murphy L."/>
            <person name="Rutter S."/>
            <person name="Squares R."/>
            <person name="Quail M.A."/>
            <person name="Saunders E."/>
            <person name="Mavromatis K."/>
            <person name="Brettin T.S."/>
            <person name="Bentley S.D."/>
            <person name="Hothersall J."/>
            <person name="Stephens E."/>
            <person name="Thomas C.M."/>
            <person name="Parkhill J."/>
            <person name="Levy S.B."/>
            <person name="Rainey P.B."/>
            <person name="Thomson N.R."/>
        </authorList>
    </citation>
    <scope>NUCLEOTIDE SEQUENCE [LARGE SCALE GENOMIC DNA]</scope>
    <source>
        <strain>SBW25</strain>
    </source>
</reference>
<feature type="chain" id="PRO_1000204788" description="Potassium-transporting ATPase potassium-binding subunit">
    <location>
        <begin position="1"/>
        <end position="564"/>
    </location>
</feature>
<feature type="transmembrane region" description="Helical" evidence="1">
    <location>
        <begin position="4"/>
        <end position="24"/>
    </location>
</feature>
<feature type="transmembrane region" description="Helical" evidence="1">
    <location>
        <begin position="67"/>
        <end position="87"/>
    </location>
</feature>
<feature type="transmembrane region" description="Helical" evidence="1">
    <location>
        <begin position="135"/>
        <end position="155"/>
    </location>
</feature>
<feature type="transmembrane region" description="Helical" evidence="1">
    <location>
        <begin position="179"/>
        <end position="199"/>
    </location>
</feature>
<feature type="transmembrane region" description="Helical" evidence="1">
    <location>
        <begin position="254"/>
        <end position="274"/>
    </location>
</feature>
<feature type="transmembrane region" description="Helical" evidence="1">
    <location>
        <begin position="286"/>
        <end position="306"/>
    </location>
</feature>
<feature type="transmembrane region" description="Helical" evidence="1">
    <location>
        <begin position="382"/>
        <end position="402"/>
    </location>
</feature>
<feature type="transmembrane region" description="Helical" evidence="1">
    <location>
        <begin position="420"/>
        <end position="440"/>
    </location>
</feature>
<feature type="transmembrane region" description="Helical" evidence="1">
    <location>
        <begin position="487"/>
        <end position="507"/>
    </location>
</feature>
<feature type="transmembrane region" description="Helical" evidence="1">
    <location>
        <begin position="528"/>
        <end position="548"/>
    </location>
</feature>
<comment type="function">
    <text evidence="1">Part of the high-affinity ATP-driven potassium transport (or Kdp) system, which catalyzes the hydrolysis of ATP coupled with the electrogenic transport of potassium into the cytoplasm. This subunit binds the periplasmic potassium ions and delivers the ions to the membrane domain of KdpB through an intramembrane tunnel.</text>
</comment>
<comment type="subunit">
    <text evidence="1">The system is composed of three essential subunits: KdpA, KdpB and KdpC.</text>
</comment>
<comment type="subcellular location">
    <subcellularLocation>
        <location evidence="1">Cell inner membrane</location>
        <topology evidence="1">Multi-pass membrane protein</topology>
    </subcellularLocation>
</comment>
<comment type="similarity">
    <text evidence="1">Belongs to the KdpA family.</text>
</comment>
<proteinExistence type="inferred from homology"/>
<organism>
    <name type="scientific">Pseudomonas fluorescens (strain SBW25)</name>
    <dbReference type="NCBI Taxonomy" id="216595"/>
    <lineage>
        <taxon>Bacteria</taxon>
        <taxon>Pseudomonadati</taxon>
        <taxon>Pseudomonadota</taxon>
        <taxon>Gammaproteobacteria</taxon>
        <taxon>Pseudomonadales</taxon>
        <taxon>Pseudomonadaceae</taxon>
        <taxon>Pseudomonas</taxon>
    </lineage>
</organism>
<sequence>MHSYDYWLIIAFFAVVLVPAPFLGRFYYKVMEGQRTWLTPVLGPVERACYRLSGVDEQQEQSWQKYMLALLAFNLAGFLLLFAILLFQDYLPLNPQKLPGQEWTLAFNTAVSFMTNTNWQSYSGEASLSYLSQMAGLTVQNFVSAATGLAVLVALCRGIGRKSTKTLGNFWVDMTRATLYGLLPLCLVLALFLVWQGVPQTFAHYVDAVTMQGVDQVIPLGPAASQIAIKQLGTNGGGFFGVNSAHPFEDPTAWANLFELAAIILIPVALVFTFGHYVKDLRQSRAILGCMLALFLIGGATSLWAEYQPNPTLNNPAVEQAAPLEGKEARFGTTGTVLWSVTTTAASNGSVNGMQDSLNPLSGMVALVNMMVGEVIFGGVGAGMYGMLLNVLIAVFLAGLMIGRTPEYLGKKLQAKEVQLLVVTLLVMPVGVLVLGAIAASLPGPAGAISNPGPHGFSQLLYAYTSASANNGSAFGGFSANTPFHNLMLGLGMLIGRFGYILPVLALAGSLAMKKTAPIGQNSFPTHGPLFVTLLTVTILLVGGLTFLPTLALGPIAEHLSMGF</sequence>
<name>KDPA_PSEFS</name>